<name>4CLL5_ARATH</name>
<dbReference type="EC" id="6.2.1.-" evidence="4 5"/>
<dbReference type="EMBL" id="AY250838">
    <property type="protein sequence ID" value="AAP03021.1"/>
    <property type="molecule type" value="mRNA"/>
</dbReference>
<dbReference type="EMBL" id="EF014466">
    <property type="protein sequence ID" value="ABJ98946.1"/>
    <property type="molecule type" value="mRNA"/>
</dbReference>
<dbReference type="EMBL" id="AC027665">
    <property type="protein sequence ID" value="AAF79611.1"/>
    <property type="status" value="ALT_SEQ"/>
    <property type="molecule type" value="Genomic_DNA"/>
</dbReference>
<dbReference type="EMBL" id="CP002684">
    <property type="protein sequence ID" value="AEE29980.1"/>
    <property type="molecule type" value="Genomic_DNA"/>
</dbReference>
<dbReference type="EMBL" id="AF360250">
    <property type="protein sequence ID" value="AAK25960.1"/>
    <property type="molecule type" value="mRNA"/>
</dbReference>
<dbReference type="EMBL" id="AY040047">
    <property type="protein sequence ID" value="AAK64105.1"/>
    <property type="molecule type" value="mRNA"/>
</dbReference>
<dbReference type="RefSeq" id="NP_564115.1">
    <molecule id="Q84P21-1"/>
    <property type="nucleotide sequence ID" value="NM_101901.4"/>
</dbReference>
<dbReference type="SMR" id="Q84P21"/>
<dbReference type="FunCoup" id="Q84P21">
    <property type="interactions" value="1054"/>
</dbReference>
<dbReference type="STRING" id="3702.Q84P21"/>
<dbReference type="SwissLipids" id="SLP:000001781"/>
<dbReference type="PaxDb" id="3702-AT1G20510.1"/>
<dbReference type="ProteomicsDB" id="244550">
    <molecule id="Q84P21-1"/>
</dbReference>
<dbReference type="EnsemblPlants" id="AT1G20510.1">
    <molecule id="Q84P21-1"/>
    <property type="protein sequence ID" value="AT1G20510.1"/>
    <property type="gene ID" value="AT1G20510"/>
</dbReference>
<dbReference type="GeneID" id="838639"/>
<dbReference type="Gramene" id="AT1G20510.1">
    <molecule id="Q84P21-1"/>
    <property type="protein sequence ID" value="AT1G20510.1"/>
    <property type="gene ID" value="AT1G20510"/>
</dbReference>
<dbReference type="KEGG" id="ath:AT1G20510"/>
<dbReference type="Araport" id="AT1G20510"/>
<dbReference type="TAIR" id="AT1G20510">
    <property type="gene designation" value="OPCL1"/>
</dbReference>
<dbReference type="eggNOG" id="KOG1176">
    <property type="taxonomic scope" value="Eukaryota"/>
</dbReference>
<dbReference type="HOGENOM" id="CLU_000022_59_2_1"/>
<dbReference type="InParanoid" id="Q84P21"/>
<dbReference type="OMA" id="IPINPIY"/>
<dbReference type="OrthoDB" id="10253869at2759"/>
<dbReference type="PhylomeDB" id="Q84P21"/>
<dbReference type="BRENDA" id="6.2.1.B3">
    <property type="organism ID" value="399"/>
</dbReference>
<dbReference type="SABIO-RK" id="Q84P21"/>
<dbReference type="PRO" id="PR:Q84P21"/>
<dbReference type="Proteomes" id="UP000006548">
    <property type="component" value="Chromosome 1"/>
</dbReference>
<dbReference type="ExpressionAtlas" id="Q84P21">
    <property type="expression patterns" value="baseline and differential"/>
</dbReference>
<dbReference type="GO" id="GO:0005777">
    <property type="term" value="C:peroxisome"/>
    <property type="evidence" value="ECO:0000314"/>
    <property type="project" value="UniProtKB"/>
</dbReference>
<dbReference type="GO" id="GO:0005524">
    <property type="term" value="F:ATP binding"/>
    <property type="evidence" value="ECO:0007669"/>
    <property type="project" value="UniProtKB-KW"/>
</dbReference>
<dbReference type="GO" id="GO:0016405">
    <property type="term" value="F:CoA-ligase activity"/>
    <property type="evidence" value="ECO:0000314"/>
    <property type="project" value="UniProtKB"/>
</dbReference>
<dbReference type="GO" id="GO:0102391">
    <property type="term" value="F:decanoate-CoA ligase activity"/>
    <property type="evidence" value="ECO:0007669"/>
    <property type="project" value="RHEA"/>
</dbReference>
<dbReference type="GO" id="GO:0009695">
    <property type="term" value="P:jasmonic acid biosynthetic process"/>
    <property type="evidence" value="ECO:0000314"/>
    <property type="project" value="UniProtKB"/>
</dbReference>
<dbReference type="GO" id="GO:0009617">
    <property type="term" value="P:response to bacterium"/>
    <property type="evidence" value="ECO:0000314"/>
    <property type="project" value="UniProtKB"/>
</dbReference>
<dbReference type="GO" id="GO:0009753">
    <property type="term" value="P:response to jasmonic acid"/>
    <property type="evidence" value="ECO:0000314"/>
    <property type="project" value="UniProtKB"/>
</dbReference>
<dbReference type="GO" id="GO:0009611">
    <property type="term" value="P:response to wounding"/>
    <property type="evidence" value="ECO:0000270"/>
    <property type="project" value="UniProtKB"/>
</dbReference>
<dbReference type="CDD" id="cd05904">
    <property type="entry name" value="4CL"/>
    <property type="match status" value="1"/>
</dbReference>
<dbReference type="FunFam" id="3.30.300.30:FF:000007">
    <property type="entry name" value="4-coumarate--CoA ligase 2"/>
    <property type="match status" value="1"/>
</dbReference>
<dbReference type="FunFam" id="3.40.50.12780:FF:000003">
    <property type="entry name" value="Long-chain-fatty-acid--CoA ligase FadD"/>
    <property type="match status" value="1"/>
</dbReference>
<dbReference type="Gene3D" id="3.30.300.30">
    <property type="match status" value="1"/>
</dbReference>
<dbReference type="Gene3D" id="3.40.50.12780">
    <property type="entry name" value="N-terminal domain of ligase-like"/>
    <property type="match status" value="1"/>
</dbReference>
<dbReference type="InterPro" id="IPR025110">
    <property type="entry name" value="AMP-bd_C"/>
</dbReference>
<dbReference type="InterPro" id="IPR045851">
    <property type="entry name" value="AMP-bd_C_sf"/>
</dbReference>
<dbReference type="InterPro" id="IPR020845">
    <property type="entry name" value="AMP-binding_CS"/>
</dbReference>
<dbReference type="InterPro" id="IPR000873">
    <property type="entry name" value="AMP-dep_synth/lig_dom"/>
</dbReference>
<dbReference type="InterPro" id="IPR042099">
    <property type="entry name" value="ANL_N_sf"/>
</dbReference>
<dbReference type="PANTHER" id="PTHR24096">
    <property type="entry name" value="LONG-CHAIN-FATTY-ACID--COA LIGASE"/>
    <property type="match status" value="1"/>
</dbReference>
<dbReference type="PANTHER" id="PTHR24096:SF413">
    <property type="entry name" value="PEROXISOMAL OPC-8:0-COA LIGASE 1"/>
    <property type="match status" value="1"/>
</dbReference>
<dbReference type="Pfam" id="PF00501">
    <property type="entry name" value="AMP-binding"/>
    <property type="match status" value="1"/>
</dbReference>
<dbReference type="Pfam" id="PF13193">
    <property type="entry name" value="AMP-binding_C"/>
    <property type="match status" value="1"/>
</dbReference>
<dbReference type="SUPFAM" id="SSF56801">
    <property type="entry name" value="Acetyl-CoA synthetase-like"/>
    <property type="match status" value="1"/>
</dbReference>
<dbReference type="PROSITE" id="PS00455">
    <property type="entry name" value="AMP_BINDING"/>
    <property type="match status" value="1"/>
</dbReference>
<evidence type="ECO:0000250" key="1">
    <source>
        <dbReference type="UniProtKB" id="O24146"/>
    </source>
</evidence>
<evidence type="ECO:0000250" key="2">
    <source>
        <dbReference type="UniProtKB" id="Q42524"/>
    </source>
</evidence>
<evidence type="ECO:0000255" key="3"/>
<evidence type="ECO:0000269" key="4">
    <source>
    </source>
</evidence>
<evidence type="ECO:0000269" key="5">
    <source>
    </source>
</evidence>
<evidence type="ECO:0000303" key="6">
    <source>
    </source>
</evidence>
<evidence type="ECO:0000303" key="7">
    <source>
    </source>
</evidence>
<evidence type="ECO:0000303" key="8">
    <source>
    </source>
</evidence>
<evidence type="ECO:0000305" key="9"/>
<evidence type="ECO:0000312" key="10">
    <source>
        <dbReference type="Araport" id="AT1G20510"/>
    </source>
</evidence>
<evidence type="ECO:0000312" key="11">
    <source>
        <dbReference type="EMBL" id="AAF79611.1"/>
    </source>
</evidence>
<protein>
    <recommendedName>
        <fullName evidence="7 8">Peroxisomal OPC-8:0-CoA ligase 1</fullName>
        <ecNumber evidence="4 5">6.2.1.-</ecNumber>
    </recommendedName>
    <alternativeName>
        <fullName>4-coumarate--CoA ligase isoform 9</fullName>
        <shortName>At4CL9</shortName>
    </alternativeName>
    <alternativeName>
        <fullName evidence="6">4-coumarate--CoA ligase-like 5</fullName>
    </alternativeName>
</protein>
<organism>
    <name type="scientific">Arabidopsis thaliana</name>
    <name type="common">Mouse-ear cress</name>
    <dbReference type="NCBI Taxonomy" id="3702"/>
    <lineage>
        <taxon>Eukaryota</taxon>
        <taxon>Viridiplantae</taxon>
        <taxon>Streptophyta</taxon>
        <taxon>Embryophyta</taxon>
        <taxon>Tracheophyta</taxon>
        <taxon>Spermatophyta</taxon>
        <taxon>Magnoliopsida</taxon>
        <taxon>eudicotyledons</taxon>
        <taxon>Gunneridae</taxon>
        <taxon>Pentapetalae</taxon>
        <taxon>rosids</taxon>
        <taxon>malvids</taxon>
        <taxon>Brassicales</taxon>
        <taxon>Brassicaceae</taxon>
        <taxon>Camelineae</taxon>
        <taxon>Arabidopsis</taxon>
    </lineage>
</organism>
<comment type="function">
    <text evidence="1 4 5">Contributes to jasmonic acid biosynthesis by initiating the beta-oxidative chain shortening of its precursors (PubMed:16963437, PubMed:18267944). Converts 12-oxo-phytodienoic acid (OPDA) and 3-oxo-2-(2'-pentenyl)-cyclopentane-1-octanoic acid (OPC-8:0) into OPDA-CoA and OPC-8:0-CoA, respectively (PubMed:16963437, PubMed:18267944). Follows a two-step reaction mechanism, wherein the carboxylate substrate first undergoes adenylation by ATP, followed by a thioesterification in the presence of CoA to yield the final CoA thioester (By similarity).</text>
</comment>
<comment type="catalytic activity">
    <reaction evidence="4 5">
        <text>(9S,13S,15Z)-12-oxophyto-10,15-dienoate + ATP + CoA = (10Z,15Z)-12-oxophytodienoyl-CoA + AMP + diphosphate</text>
        <dbReference type="Rhea" id="RHEA:54896"/>
        <dbReference type="ChEBI" id="CHEBI:30616"/>
        <dbReference type="ChEBI" id="CHEBI:33019"/>
        <dbReference type="ChEBI" id="CHEBI:57287"/>
        <dbReference type="ChEBI" id="CHEBI:57411"/>
        <dbReference type="ChEBI" id="CHEBI:138398"/>
        <dbReference type="ChEBI" id="CHEBI:456215"/>
    </reaction>
    <physiologicalReaction direction="left-to-right" evidence="4 5">
        <dbReference type="Rhea" id="RHEA:54897"/>
    </physiologicalReaction>
</comment>
<comment type="catalytic activity">
    <reaction evidence="4 5">
        <text>(1S,2S)-OPC-8 + ATP + CoA = OPC8-CoA + AMP + diphosphate</text>
        <dbReference type="Rhea" id="RHEA:54888"/>
        <dbReference type="ChEBI" id="CHEBI:30616"/>
        <dbReference type="ChEBI" id="CHEBI:33019"/>
        <dbReference type="ChEBI" id="CHEBI:57287"/>
        <dbReference type="ChEBI" id="CHEBI:138396"/>
        <dbReference type="ChEBI" id="CHEBI:191855"/>
        <dbReference type="ChEBI" id="CHEBI:456215"/>
    </reaction>
    <physiologicalReaction direction="left-to-right" evidence="4 5">
        <dbReference type="Rhea" id="RHEA:54889"/>
    </physiologicalReaction>
</comment>
<comment type="catalytic activity">
    <reaction evidence="5">
        <text>hexadecanoate + ATP + CoA = hexadecanoyl-CoA + AMP + diphosphate</text>
        <dbReference type="Rhea" id="RHEA:30751"/>
        <dbReference type="ChEBI" id="CHEBI:7896"/>
        <dbReference type="ChEBI" id="CHEBI:30616"/>
        <dbReference type="ChEBI" id="CHEBI:33019"/>
        <dbReference type="ChEBI" id="CHEBI:57287"/>
        <dbReference type="ChEBI" id="CHEBI:57379"/>
        <dbReference type="ChEBI" id="CHEBI:456215"/>
    </reaction>
    <physiologicalReaction direction="left-to-right" evidence="5">
        <dbReference type="Rhea" id="RHEA:30752"/>
    </physiologicalReaction>
</comment>
<comment type="catalytic activity">
    <reaction evidence="4 5">
        <text>(9Z)-octadecenoate + ATP + CoA = (9Z)-octadecenoyl-CoA + AMP + diphosphate</text>
        <dbReference type="Rhea" id="RHEA:33607"/>
        <dbReference type="ChEBI" id="CHEBI:30616"/>
        <dbReference type="ChEBI" id="CHEBI:30823"/>
        <dbReference type="ChEBI" id="CHEBI:33019"/>
        <dbReference type="ChEBI" id="CHEBI:57287"/>
        <dbReference type="ChEBI" id="CHEBI:57387"/>
        <dbReference type="ChEBI" id="CHEBI:456215"/>
    </reaction>
    <physiologicalReaction direction="left-to-right" evidence="4 5">
        <dbReference type="Rhea" id="RHEA:33608"/>
    </physiologicalReaction>
</comment>
<comment type="catalytic activity">
    <reaction evidence="4 5">
        <text>tetradecanoate + ATP + CoA = tetradecanoyl-CoA + AMP + diphosphate</text>
        <dbReference type="Rhea" id="RHEA:33619"/>
        <dbReference type="ChEBI" id="CHEBI:30616"/>
        <dbReference type="ChEBI" id="CHEBI:30807"/>
        <dbReference type="ChEBI" id="CHEBI:33019"/>
        <dbReference type="ChEBI" id="CHEBI:57287"/>
        <dbReference type="ChEBI" id="CHEBI:57385"/>
        <dbReference type="ChEBI" id="CHEBI:456215"/>
    </reaction>
    <physiologicalReaction direction="left-to-right" evidence="4 5">
        <dbReference type="Rhea" id="RHEA:33620"/>
    </physiologicalReaction>
</comment>
<comment type="catalytic activity">
    <reaction evidence="5">
        <text>decanoate + ATP + CoA = decanoyl-CoA + AMP + diphosphate</text>
        <dbReference type="Rhea" id="RHEA:33627"/>
        <dbReference type="ChEBI" id="CHEBI:27689"/>
        <dbReference type="ChEBI" id="CHEBI:30616"/>
        <dbReference type="ChEBI" id="CHEBI:33019"/>
        <dbReference type="ChEBI" id="CHEBI:57287"/>
        <dbReference type="ChEBI" id="CHEBI:61430"/>
        <dbReference type="ChEBI" id="CHEBI:456215"/>
    </reaction>
    <physiologicalReaction direction="left-to-right" evidence="5">
        <dbReference type="Rhea" id="RHEA:33628"/>
    </physiologicalReaction>
</comment>
<comment type="catalytic activity">
    <reaction evidence="5">
        <text>dodecanoate + ATP + CoA = dodecanoyl-CoA + AMP + diphosphate</text>
        <dbReference type="Rhea" id="RHEA:33623"/>
        <dbReference type="ChEBI" id="CHEBI:18262"/>
        <dbReference type="ChEBI" id="CHEBI:30616"/>
        <dbReference type="ChEBI" id="CHEBI:33019"/>
        <dbReference type="ChEBI" id="CHEBI:57287"/>
        <dbReference type="ChEBI" id="CHEBI:57375"/>
        <dbReference type="ChEBI" id="CHEBI:456215"/>
    </reaction>
    <physiologicalReaction direction="left-to-right" evidence="5">
        <dbReference type="Rhea" id="RHEA:33624"/>
    </physiologicalReaction>
</comment>
<comment type="catalytic activity">
    <reaction evidence="5">
        <text>octadecanoate + ATP + CoA = octadecanoyl-CoA + AMP + diphosphate</text>
        <dbReference type="Rhea" id="RHEA:33615"/>
        <dbReference type="ChEBI" id="CHEBI:25629"/>
        <dbReference type="ChEBI" id="CHEBI:30616"/>
        <dbReference type="ChEBI" id="CHEBI:33019"/>
        <dbReference type="ChEBI" id="CHEBI:57287"/>
        <dbReference type="ChEBI" id="CHEBI:57394"/>
        <dbReference type="ChEBI" id="CHEBI:456215"/>
    </reaction>
    <physiologicalReaction direction="left-to-right" evidence="5">
        <dbReference type="Rhea" id="RHEA:33616"/>
    </physiologicalReaction>
</comment>
<comment type="catalytic activity">
    <reaction evidence="5">
        <text>OPC-6 + ATP + CoA = OPC-6-CoA + AMP + diphosphate</text>
        <dbReference type="Rhea" id="RHEA:54956"/>
        <dbReference type="ChEBI" id="CHEBI:30616"/>
        <dbReference type="ChEBI" id="CHEBI:33019"/>
        <dbReference type="ChEBI" id="CHEBI:57287"/>
        <dbReference type="ChEBI" id="CHEBI:138430"/>
        <dbReference type="ChEBI" id="CHEBI:138431"/>
        <dbReference type="ChEBI" id="CHEBI:456215"/>
    </reaction>
    <physiologicalReaction direction="left-to-right" evidence="5">
        <dbReference type="Rhea" id="RHEA:54957"/>
    </physiologicalReaction>
</comment>
<comment type="catalytic activity">
    <reaction evidence="5">
        <text>dinor-OPDA + ATP + CoA = dinor-OPDA-CoA + AMP + diphosphate</text>
        <dbReference type="Rhea" id="RHEA:54960"/>
        <dbReference type="ChEBI" id="CHEBI:30616"/>
        <dbReference type="ChEBI" id="CHEBI:33019"/>
        <dbReference type="ChEBI" id="CHEBI:57287"/>
        <dbReference type="ChEBI" id="CHEBI:138432"/>
        <dbReference type="ChEBI" id="CHEBI:138433"/>
        <dbReference type="ChEBI" id="CHEBI:456215"/>
    </reaction>
    <physiologicalReaction direction="left-to-right" evidence="5">
        <dbReference type="Rhea" id="RHEA:54961"/>
    </physiologicalReaction>
</comment>
<comment type="cofactor">
    <cofactor evidence="1">
        <name>Mg(2+)</name>
        <dbReference type="ChEBI" id="CHEBI:18420"/>
    </cofactor>
</comment>
<comment type="biophysicochemical properties">
    <kinetics>
        <KM evidence="4">24 uM for OPDA</KM>
        <KM evidence="4">47 uM for OPC-8:0</KM>
        <KM evidence="5">36 uM for tetradecanoate</KM>
        <KM evidence="5">27 uM for OPDA</KM>
        <KM evidence="5">76 uM for dnOPDA</KM>
        <KM evidence="5">19 uM for OPC-8:0</KM>
        <KM evidence="5">94 uM for OPC-6:0</KM>
        <text evidence="5">kcat is 0.96 sec(-1) with tetradecanoate as substrate (PubMed:18267944). kcat is 1.56 sec(-1) with OPDA as substrate (PubMed:18267944). kcat is 1.78 sec(-1) with dnOPDA as substrate (PubMed:18267944). kcat is 1.27 sec(-1) with OPC-8:0 as substrate (PubMed:18267944). kcat is 1.49 sec(-1) with OPC-6:0 as substrate (PubMed:18267944).</text>
    </kinetics>
</comment>
<comment type="subcellular location">
    <subcellularLocation>
        <location evidence="4 5">Peroxisome</location>
    </subcellularLocation>
</comment>
<comment type="alternative products">
    <event type="alternative splicing"/>
    <isoform>
        <id>Q84P21-1</id>
        <name>1</name>
        <sequence type="displayed"/>
    </isoform>
    <text>A number of isoforms are produced. According to EST sequences.</text>
</comment>
<comment type="tissue specificity">
    <text evidence="5">Expressed at low levels in seedlings, cotyledons, leaves, hypocotyls and roots.</text>
</comment>
<comment type="developmental stage">
    <text evidence="5">In seedlings, present at low levels in the vascular system of cotyledons, leaves, hypocotyls, roots and hydathodes (PubMed:18267944). In roots, accumulates mostly in the zone of cell division proximal to the root tip, in the vascular system and primordial cells of lateral roots and, at low levels, in some superficial cells of the elongation zone (PubMed:18267944). In mature plants, observed in the vasculature of leaves, stems, and roots, with a progressive expression increase in mesophyll cells during aging (PubMed:18267944). Weakly detected in the young parts of the bolting stem (PubMed:18267944).</text>
</comment>
<comment type="induction">
    <text evidence="4 5">By wounding or by jasmonic acid (MeJA) treatment (PubMed:16963437, PubMed:18267944). Accumulates upon infection by incompatible pathogens (e.g. Pseudomonas syringae pv. tomato (Pst) carrying avrRpm1) (PubMed:18267944).</text>
</comment>
<comment type="domain">
    <text evidence="2">Both substrate-binding domains (SBD1 and SBD2) are involved in the substrate recognition, and are sufficient to confer the substrate specificity.</text>
</comment>
<comment type="disruption phenotype">
    <text evidence="5">No obvious phenotype in growth, root and flower development, fertility, reproduction and morphology (PubMed:18267944). Reduced jasmonic acid (JA) accumulation after wounding (PubMed:18267944).</text>
</comment>
<comment type="similarity">
    <text evidence="9">Belongs to the ATP-dependent AMP-binding enzyme family.</text>
</comment>
<comment type="sequence caution" evidence="9">
    <conflict type="erroneous gene model prediction">
        <sequence resource="EMBL-CDS" id="AAF79611"/>
    </conflict>
</comment>
<proteinExistence type="evidence at protein level"/>
<sequence>MASVNSRSGFCNSNSTFYSKRTPIPLPPNPSLDVTTFISSQAHRGRIAFIDASTGQNLTFTELWRAVESVADCLSEIGIRKGHVVLLLSPNSILFPVVCLSVMSLGAIITTTNPLNTSNEIAKQIKDSNPVLAFTTSQLLPKISAAAKKLPIVLMDEERVDSVGDVRRLVEMMKKEPSGNRVKERVDQDDTATLLYSSGTTGMSKGVISSHRNLIAMVQTIVNRFGSDDGEQRFICTVPMFHIYGLAAFATGLLAYGSTIIVLSKFEMHEMMSAIGKYQATSLPLVPPILVAMVNGADQIKAKYDLSSMHTVLCGGAPLSKEVTEGFAEKYPTVKILQGYGLTESTGIGASTDTVEESRRYGTAGKLSASMEGRIVDPVTGQILGPKQTGELWLKGPSIMKGYFSNEEATSSTLDSEGWLRTGDLCYIDEDGFIFVVDRLKELIKYKGYQVAPAELEALLLTHPEITDAAVIPFPDKEVGQFPMAYVVRKTGSSLSEKTIMEFVAKQVAPYKRIRKVAFVSSIPKNPSGKILRKDLIKIATSNSKL</sequence>
<keyword id="KW-0025">Alternative splicing</keyword>
<keyword id="KW-0067">ATP-binding</keyword>
<keyword id="KW-1184">Jasmonic acid signaling pathway</keyword>
<keyword id="KW-0436">Ligase</keyword>
<keyword id="KW-0460">Magnesium</keyword>
<keyword id="KW-0547">Nucleotide-binding</keyword>
<keyword id="KW-0576">Peroxisome</keyword>
<keyword id="KW-1185">Reference proteome</keyword>
<feature type="chain" id="PRO_0000299178" description="Peroxisomal OPC-8:0-CoA ligase 1">
    <location>
        <begin position="1"/>
        <end position="546"/>
    </location>
</feature>
<feature type="region of interest" description="SBD1" evidence="2">
    <location>
        <begin position="267"/>
        <end position="338"/>
    </location>
</feature>
<feature type="region of interest" description="SBD2" evidence="2">
    <location>
        <begin position="339"/>
        <end position="403"/>
    </location>
</feature>
<feature type="short sequence motif" description="Microbody targeting signal" evidence="3">
    <location>
        <begin position="544"/>
        <end position="546"/>
    </location>
</feature>
<feature type="binding site" evidence="1">
    <location>
        <position position="197"/>
    </location>
    <ligand>
        <name>ATP</name>
        <dbReference type="ChEBI" id="CHEBI:30616"/>
    </ligand>
</feature>
<feature type="binding site" evidence="1">
    <location>
        <position position="198"/>
    </location>
    <ligand>
        <name>ATP</name>
        <dbReference type="ChEBI" id="CHEBI:30616"/>
    </ligand>
</feature>
<feature type="binding site" evidence="1">
    <location>
        <position position="199"/>
    </location>
    <ligand>
        <name>ATP</name>
        <dbReference type="ChEBI" id="CHEBI:30616"/>
    </ligand>
</feature>
<feature type="binding site" evidence="1">
    <location>
        <position position="200"/>
    </location>
    <ligand>
        <name>ATP</name>
        <dbReference type="ChEBI" id="CHEBI:30616"/>
    </ligand>
</feature>
<feature type="binding site" evidence="1">
    <location>
        <position position="201"/>
    </location>
    <ligand>
        <name>ATP</name>
        <dbReference type="ChEBI" id="CHEBI:30616"/>
    </ligand>
</feature>
<feature type="binding site" evidence="1">
    <location>
        <position position="205"/>
    </location>
    <ligand>
        <name>ATP</name>
        <dbReference type="ChEBI" id="CHEBI:30616"/>
    </ligand>
</feature>
<feature type="binding site" evidence="1">
    <location>
        <position position="265"/>
    </location>
    <ligand>
        <name>CoA</name>
        <dbReference type="ChEBI" id="CHEBI:57287"/>
    </ligand>
</feature>
<feature type="binding site" evidence="1">
    <location>
        <position position="338"/>
    </location>
    <ligand>
        <name>ATP</name>
        <dbReference type="ChEBI" id="CHEBI:30616"/>
    </ligand>
</feature>
<feature type="binding site" evidence="1">
    <location>
        <position position="339"/>
    </location>
    <ligand>
        <name>ATP</name>
        <dbReference type="ChEBI" id="CHEBI:30616"/>
    </ligand>
</feature>
<feature type="binding site" evidence="1">
    <location>
        <position position="343"/>
    </location>
    <ligand>
        <name>ATP</name>
        <dbReference type="ChEBI" id="CHEBI:30616"/>
    </ligand>
</feature>
<feature type="binding site" evidence="1">
    <location>
        <position position="424"/>
    </location>
    <ligand>
        <name>ATP</name>
        <dbReference type="ChEBI" id="CHEBI:30616"/>
    </ligand>
</feature>
<feature type="binding site" evidence="1">
    <location>
        <position position="439"/>
    </location>
    <ligand>
        <name>ATP</name>
        <dbReference type="ChEBI" id="CHEBI:30616"/>
    </ligand>
</feature>
<feature type="binding site" evidence="1">
    <location>
        <position position="447"/>
    </location>
    <ligand>
        <name>CoA</name>
        <dbReference type="ChEBI" id="CHEBI:57287"/>
    </ligand>
</feature>
<feature type="binding site" evidence="1">
    <location>
        <position position="448"/>
    </location>
    <ligand>
        <name>CoA</name>
        <dbReference type="ChEBI" id="CHEBI:57287"/>
    </ligand>
</feature>
<feature type="binding site" evidence="1">
    <location>
        <position position="530"/>
    </location>
    <ligand>
        <name>ATP</name>
        <dbReference type="ChEBI" id="CHEBI:30616"/>
    </ligand>
</feature>
<feature type="mutagenesis site" description="Lossed enzymatic activity." evidence="5">
    <original>K</original>
    <variation>N</variation>
    <location>
        <position position="530"/>
    </location>
</feature>
<feature type="sequence conflict" description="In Ref. 1; AAP03021." evidence="9" ref="1">
    <original>A</original>
    <variation>T</variation>
    <location>
        <position position="247"/>
    </location>
</feature>
<gene>
    <name evidence="6" type="primary">4CLL5</name>
    <name evidence="7 8" type="synonym">OPCL1</name>
    <name evidence="10" type="ordered locus">At1g20510</name>
    <name evidence="11" type="ORF">F5M15.17</name>
</gene>
<reference key="1">
    <citation type="journal article" date="2003" name="Plant Physiol.">
        <title>Arabidopsis contains a large superfamily of acyl-activating enzymes. Phylogenetic and biochemical analysis reveals a new class of acyl-coenzyme a synthetases.</title>
        <authorList>
            <person name="Shockey J.M."/>
            <person name="Fulda M.S."/>
            <person name="Browse J."/>
        </authorList>
    </citation>
    <scope>NUCLEOTIDE SEQUENCE [MRNA]</scope>
    <scope>GENE FAMILY ORGANIZATION</scope>
    <source>
        <strain>cv. Wassilewskija</strain>
    </source>
</reference>
<reference key="2">
    <citation type="journal article" date="2006" name="J. Biol. Chem.">
        <title>Identification of a peroxisomal acyl-activating enzyme involved in the biosynthesis of jasmonic acid in Arabidopsis.</title>
        <authorList>
            <person name="Koo A.J.K."/>
            <person name="Chung H.S."/>
            <person name="Kobayashi Y."/>
            <person name="Howe G.A."/>
        </authorList>
    </citation>
    <scope>NUCLEOTIDE SEQUENCE [MRNA]</scope>
    <scope>FUNCTION</scope>
    <scope>CATALYTIC ACTIVITY</scope>
    <scope>BIOPHYSICOCHEMICAL PROPERTIES</scope>
    <scope>SUBCELLULAR LOCATION</scope>
    <scope>INDUCTION</scope>
</reference>
<reference key="3">
    <citation type="journal article" date="2000" name="Nature">
        <title>Sequence and analysis of chromosome 1 of the plant Arabidopsis thaliana.</title>
        <authorList>
            <person name="Theologis A."/>
            <person name="Ecker J.R."/>
            <person name="Palm C.J."/>
            <person name="Federspiel N.A."/>
            <person name="Kaul S."/>
            <person name="White O."/>
            <person name="Alonso J."/>
            <person name="Altafi H."/>
            <person name="Araujo R."/>
            <person name="Bowman C.L."/>
            <person name="Brooks S.Y."/>
            <person name="Buehler E."/>
            <person name="Chan A."/>
            <person name="Chao Q."/>
            <person name="Chen H."/>
            <person name="Cheuk R.F."/>
            <person name="Chin C.W."/>
            <person name="Chung M.K."/>
            <person name="Conn L."/>
            <person name="Conway A.B."/>
            <person name="Conway A.R."/>
            <person name="Creasy T.H."/>
            <person name="Dewar K."/>
            <person name="Dunn P."/>
            <person name="Etgu P."/>
            <person name="Feldblyum T.V."/>
            <person name="Feng J.-D."/>
            <person name="Fong B."/>
            <person name="Fujii C.Y."/>
            <person name="Gill J.E."/>
            <person name="Goldsmith A.D."/>
            <person name="Haas B."/>
            <person name="Hansen N.F."/>
            <person name="Hughes B."/>
            <person name="Huizar L."/>
            <person name="Hunter J.L."/>
            <person name="Jenkins J."/>
            <person name="Johnson-Hopson C."/>
            <person name="Khan S."/>
            <person name="Khaykin E."/>
            <person name="Kim C.J."/>
            <person name="Koo H.L."/>
            <person name="Kremenetskaia I."/>
            <person name="Kurtz D.B."/>
            <person name="Kwan A."/>
            <person name="Lam B."/>
            <person name="Langin-Hooper S."/>
            <person name="Lee A."/>
            <person name="Lee J.M."/>
            <person name="Lenz C.A."/>
            <person name="Li J.H."/>
            <person name="Li Y.-P."/>
            <person name="Lin X."/>
            <person name="Liu S.X."/>
            <person name="Liu Z.A."/>
            <person name="Luros J.S."/>
            <person name="Maiti R."/>
            <person name="Marziali A."/>
            <person name="Militscher J."/>
            <person name="Miranda M."/>
            <person name="Nguyen M."/>
            <person name="Nierman W.C."/>
            <person name="Osborne B.I."/>
            <person name="Pai G."/>
            <person name="Peterson J."/>
            <person name="Pham P.K."/>
            <person name="Rizzo M."/>
            <person name="Rooney T."/>
            <person name="Rowley D."/>
            <person name="Sakano H."/>
            <person name="Salzberg S.L."/>
            <person name="Schwartz J.R."/>
            <person name="Shinn P."/>
            <person name="Southwick A.M."/>
            <person name="Sun H."/>
            <person name="Tallon L.J."/>
            <person name="Tambunga G."/>
            <person name="Toriumi M.J."/>
            <person name="Town C.D."/>
            <person name="Utterback T."/>
            <person name="Van Aken S."/>
            <person name="Vaysberg M."/>
            <person name="Vysotskaia V.S."/>
            <person name="Walker M."/>
            <person name="Wu D."/>
            <person name="Yu G."/>
            <person name="Fraser C.M."/>
            <person name="Venter J.C."/>
            <person name="Davis R.W."/>
        </authorList>
    </citation>
    <scope>NUCLEOTIDE SEQUENCE [LARGE SCALE GENOMIC DNA]</scope>
    <source>
        <strain>cv. Columbia</strain>
    </source>
</reference>
<reference key="4">
    <citation type="journal article" date="2017" name="Plant J.">
        <title>Araport11: a complete reannotation of the Arabidopsis thaliana reference genome.</title>
        <authorList>
            <person name="Cheng C.Y."/>
            <person name="Krishnakumar V."/>
            <person name="Chan A.P."/>
            <person name="Thibaud-Nissen F."/>
            <person name="Schobel S."/>
            <person name="Town C.D."/>
        </authorList>
    </citation>
    <scope>GENOME REANNOTATION</scope>
    <source>
        <strain>cv. Columbia</strain>
    </source>
</reference>
<reference key="5">
    <citation type="journal article" date="2003" name="Science">
        <title>Empirical analysis of transcriptional activity in the Arabidopsis genome.</title>
        <authorList>
            <person name="Yamada K."/>
            <person name="Lim J."/>
            <person name="Dale J.M."/>
            <person name="Chen H."/>
            <person name="Shinn P."/>
            <person name="Palm C.J."/>
            <person name="Southwick A.M."/>
            <person name="Wu H.C."/>
            <person name="Kim C.J."/>
            <person name="Nguyen M."/>
            <person name="Pham P.K."/>
            <person name="Cheuk R.F."/>
            <person name="Karlin-Newmann G."/>
            <person name="Liu S.X."/>
            <person name="Lam B."/>
            <person name="Sakano H."/>
            <person name="Wu T."/>
            <person name="Yu G."/>
            <person name="Miranda M."/>
            <person name="Quach H.L."/>
            <person name="Tripp M."/>
            <person name="Chang C.H."/>
            <person name="Lee J.M."/>
            <person name="Toriumi M.J."/>
            <person name="Chan M.M."/>
            <person name="Tang C.C."/>
            <person name="Onodera C.S."/>
            <person name="Deng J.M."/>
            <person name="Akiyama K."/>
            <person name="Ansari Y."/>
            <person name="Arakawa T."/>
            <person name="Banh J."/>
            <person name="Banno F."/>
            <person name="Bowser L."/>
            <person name="Brooks S.Y."/>
            <person name="Carninci P."/>
            <person name="Chao Q."/>
            <person name="Choy N."/>
            <person name="Enju A."/>
            <person name="Goldsmith A.D."/>
            <person name="Gurjal M."/>
            <person name="Hansen N.F."/>
            <person name="Hayashizaki Y."/>
            <person name="Johnson-Hopson C."/>
            <person name="Hsuan V.W."/>
            <person name="Iida K."/>
            <person name="Karnes M."/>
            <person name="Khan S."/>
            <person name="Koesema E."/>
            <person name="Ishida J."/>
            <person name="Jiang P.X."/>
            <person name="Jones T."/>
            <person name="Kawai J."/>
            <person name="Kamiya A."/>
            <person name="Meyers C."/>
            <person name="Nakajima M."/>
            <person name="Narusaka M."/>
            <person name="Seki M."/>
            <person name="Sakurai T."/>
            <person name="Satou M."/>
            <person name="Tamse R."/>
            <person name="Vaysberg M."/>
            <person name="Wallender E.K."/>
            <person name="Wong C."/>
            <person name="Yamamura Y."/>
            <person name="Yuan S."/>
            <person name="Shinozaki K."/>
            <person name="Davis R.W."/>
            <person name="Theologis A."/>
            <person name="Ecker J.R."/>
        </authorList>
    </citation>
    <scope>NUCLEOTIDE SEQUENCE [LARGE SCALE MRNA]</scope>
    <source>
        <strain>cv. Columbia</strain>
    </source>
</reference>
<reference key="6">
    <citation type="journal article" date="2003" name="Proc. Natl. Acad. Sci. U.S.A.">
        <title>The substrate specificity-determining amino acid code of 4-coumarate:CoA ligase.</title>
        <authorList>
            <person name="Schneider K."/>
            <person name="Hoevel K."/>
            <person name="Witzel K."/>
            <person name="Hamberger B."/>
            <person name="Schomburg D."/>
            <person name="Kombrink E."/>
            <person name="Stuible H.-P."/>
        </authorList>
    </citation>
    <scope>GENE FAMILY ORGANIZATION</scope>
</reference>
<reference key="7">
    <citation type="journal article" date="2007" name="Plant Cell">
        <title>Proteome analysis of Arabidopsis leaf peroxisomes reveals novel targeting peptides, metabolic pathways, and defense mechanisms.</title>
        <authorList>
            <person name="Reumann S."/>
            <person name="Babujee L."/>
            <person name="Ma C."/>
            <person name="Wienkoop S."/>
            <person name="Siemsen T."/>
            <person name="Antonicelli G.E."/>
            <person name="Rasche N."/>
            <person name="Lueder F."/>
            <person name="Weckwerth W."/>
            <person name="Jahn O."/>
        </authorList>
    </citation>
    <scope>IDENTIFICATION BY MASS SPECTROMETRY</scope>
</reference>
<reference key="8">
    <citation type="journal article" date="2007" name="Plant Signal. Behav.">
        <title>Role of peroxisomal beta-oxidation in the production of plant signaling compounds.</title>
        <authorList>
            <person name="Koo A.J."/>
            <person name="Howe G.A."/>
        </authorList>
    </citation>
    <scope>REVIEW</scope>
</reference>
<reference key="9">
    <citation type="journal article" date="2008" name="J. Exp. Bot.">
        <title>Jasmonates meet fatty acids: functional analysis of a new acyl-coenzyme A synthetase family from Arabidopsis thaliana.</title>
        <authorList>
            <person name="Kienow L."/>
            <person name="Schneider K."/>
            <person name="Bartsch M."/>
            <person name="Stuible H.-P."/>
            <person name="Weng H."/>
            <person name="Miersch O."/>
            <person name="Wasternack C."/>
            <person name="Kombrink E."/>
        </authorList>
    </citation>
    <scope>FUNCTION</scope>
    <scope>MUTAGENESIS OF LYS-530</scope>
    <scope>DISRUPTION PHENOTYPE</scope>
    <scope>CATALYTIC ACTIVITY</scope>
    <scope>INDUCTION BY WOUNDING; JASMONIC ACID AND PSEUDOMONAS SYRINGAE</scope>
    <scope>BIOPHYSICOCHEMICAL PROPERTIES</scope>
    <scope>TISSUE SPECIFICITY</scope>
    <scope>DEVELOPMENTAL STAGE</scope>
    <scope>SUBCELLULAR LOCATION</scope>
    <source>
        <strain>cv. Columbia</strain>
        <strain>cv. Wassilewskija</strain>
    </source>
</reference>
<accession>Q84P21</accession>
<accession>Q9C5H2</accession>
<accession>Q9LMV8</accession>